<sequence>MPVKAGINGFGRIGRIVLRNALLHGDIDVVAVNDPFIDLEYMVYMFKYDSVHGRFKGSVEAKDGKLYVEGKPIHVFAEKDPANIPWGSVGAEYIVESTGVFTTTEKASAHLKGVCKKVIISAPSADAPMFVCGVNLDAYDSKYKVISNASCTTNCLAPLAKVIHDKFGIVQGLMTSVHATTATQKTVDGPSNKDWLGGRSVGNNIIPSSTGAAKAVGKVIPSLNGKLNGLAFRVPTVDVSVVDLVVRLEKPASYDEIKQAIKEASETTHKGILGYTEEKVVSTDFTGNDNSSIFDRDAGIALNKTFVKLISWYDNEWGYSRRCCDLLGYAAKVDGAL</sequence>
<comment type="catalytic activity">
    <reaction evidence="2">
        <text>D-glyceraldehyde 3-phosphate + phosphate + NAD(+) = (2R)-3-phospho-glyceroyl phosphate + NADH + H(+)</text>
        <dbReference type="Rhea" id="RHEA:10300"/>
        <dbReference type="ChEBI" id="CHEBI:15378"/>
        <dbReference type="ChEBI" id="CHEBI:43474"/>
        <dbReference type="ChEBI" id="CHEBI:57540"/>
        <dbReference type="ChEBI" id="CHEBI:57604"/>
        <dbReference type="ChEBI" id="CHEBI:57945"/>
        <dbReference type="ChEBI" id="CHEBI:59776"/>
        <dbReference type="EC" id="1.2.1.12"/>
    </reaction>
</comment>
<comment type="pathway">
    <text>Carbohydrate degradation; glycolysis; pyruvate from D-glyceraldehyde 3-phosphate: step 1/5.</text>
</comment>
<comment type="subunit">
    <text>Homotetramer.</text>
</comment>
<comment type="subcellular location">
    <subcellularLocation>
        <location>Cytoplasm</location>
    </subcellularLocation>
</comment>
<comment type="similarity">
    <text evidence="3">Belongs to the glyceraldehyde-3-phosphate dehydrogenase family.</text>
</comment>
<proteinExistence type="inferred from homology"/>
<feature type="chain" id="PRO_0000145566" description="Glyceraldehyde-3-phosphate dehydrogenase">
    <location>
        <begin position="1"/>
        <end position="337"/>
    </location>
</feature>
<feature type="active site" description="Nucleophile" evidence="2">
    <location>
        <position position="151"/>
    </location>
</feature>
<feature type="binding site" evidence="1">
    <location>
        <begin position="12"/>
        <end position="13"/>
    </location>
    <ligand>
        <name>NAD(+)</name>
        <dbReference type="ChEBI" id="CHEBI:57540"/>
    </ligand>
</feature>
<feature type="binding site" evidence="1">
    <location>
        <position position="34"/>
    </location>
    <ligand>
        <name>NAD(+)</name>
        <dbReference type="ChEBI" id="CHEBI:57540"/>
    </ligand>
</feature>
<feature type="binding site" evidence="1">
    <location>
        <position position="79"/>
    </location>
    <ligand>
        <name>NAD(+)</name>
        <dbReference type="ChEBI" id="CHEBI:57540"/>
    </ligand>
</feature>
<feature type="binding site" evidence="1">
    <location>
        <begin position="150"/>
        <end position="152"/>
    </location>
    <ligand>
        <name>D-glyceraldehyde 3-phosphate</name>
        <dbReference type="ChEBI" id="CHEBI:59776"/>
    </ligand>
</feature>
<feature type="binding site" evidence="1">
    <location>
        <position position="181"/>
    </location>
    <ligand>
        <name>D-glyceraldehyde 3-phosphate</name>
        <dbReference type="ChEBI" id="CHEBI:59776"/>
    </ligand>
</feature>
<feature type="binding site" evidence="1">
    <location>
        <begin position="210"/>
        <end position="211"/>
    </location>
    <ligand>
        <name>D-glyceraldehyde 3-phosphate</name>
        <dbReference type="ChEBI" id="CHEBI:59776"/>
    </ligand>
</feature>
<feature type="binding site" evidence="1">
    <location>
        <position position="233"/>
    </location>
    <ligand>
        <name>D-glyceraldehyde 3-phosphate</name>
        <dbReference type="ChEBI" id="CHEBI:59776"/>
    </ligand>
</feature>
<feature type="binding site" evidence="1">
    <location>
        <position position="315"/>
    </location>
    <ligand>
        <name>NAD(+)</name>
        <dbReference type="ChEBI" id="CHEBI:57540"/>
    </ligand>
</feature>
<feature type="site" description="Activates thiol group during catalysis" evidence="1">
    <location>
        <position position="178"/>
    </location>
</feature>
<reference key="1">
    <citation type="journal article" date="1992" name="Curr. Genet.">
        <title>Sequence analysis of the glyceraldehyde-3-phosphate dehydrogenase genes from the basidiomycetes Schizophyllum commune, Phanerochaete chrysosporium and Agaricus bisporus.</title>
        <authorList>
            <person name="Harmsen M.C."/>
            <person name="Schuren F.H.J."/>
            <person name="Moukha S.M."/>
            <person name="van Zuilen C.M."/>
            <person name="Punt P.J."/>
            <person name="Wessels J.G.H."/>
        </authorList>
    </citation>
    <scope>NUCLEOTIDE SEQUENCE [GENOMIC DNA]</scope>
</reference>
<name>G3P_PHACH</name>
<protein>
    <recommendedName>
        <fullName>Glyceraldehyde-3-phosphate dehydrogenase</fullName>
        <shortName>GAPDH</shortName>
        <ecNumber>1.2.1.12</ecNumber>
    </recommendedName>
</protein>
<gene>
    <name type="primary">GPD</name>
</gene>
<dbReference type="EC" id="1.2.1.12"/>
<dbReference type="EMBL" id="M81754">
    <property type="protein sequence ID" value="AAA33732.1"/>
    <property type="molecule type" value="Genomic_DNA"/>
</dbReference>
<dbReference type="PIR" id="S26974">
    <property type="entry name" value="S26974"/>
</dbReference>
<dbReference type="SMR" id="Q01982"/>
<dbReference type="VEuPathDB" id="FungiDB:AGR57_9217"/>
<dbReference type="UniPathway" id="UPA00109">
    <property type="reaction ID" value="UER00184"/>
</dbReference>
<dbReference type="GO" id="GO:0005829">
    <property type="term" value="C:cytosol"/>
    <property type="evidence" value="ECO:0007669"/>
    <property type="project" value="TreeGrafter"/>
</dbReference>
<dbReference type="GO" id="GO:0004365">
    <property type="term" value="F:glyceraldehyde-3-phosphate dehydrogenase (NAD+) (phosphorylating) activity"/>
    <property type="evidence" value="ECO:0007669"/>
    <property type="project" value="UniProtKB-EC"/>
</dbReference>
<dbReference type="GO" id="GO:0051287">
    <property type="term" value="F:NAD binding"/>
    <property type="evidence" value="ECO:0007669"/>
    <property type="project" value="InterPro"/>
</dbReference>
<dbReference type="GO" id="GO:0050661">
    <property type="term" value="F:NADP binding"/>
    <property type="evidence" value="ECO:0007669"/>
    <property type="project" value="InterPro"/>
</dbReference>
<dbReference type="GO" id="GO:0006006">
    <property type="term" value="P:glucose metabolic process"/>
    <property type="evidence" value="ECO:0007669"/>
    <property type="project" value="InterPro"/>
</dbReference>
<dbReference type="GO" id="GO:0006096">
    <property type="term" value="P:glycolytic process"/>
    <property type="evidence" value="ECO:0007669"/>
    <property type="project" value="UniProtKB-UniPathway"/>
</dbReference>
<dbReference type="CDD" id="cd18126">
    <property type="entry name" value="GAPDH_I_C"/>
    <property type="match status" value="1"/>
</dbReference>
<dbReference type="CDD" id="cd05214">
    <property type="entry name" value="GAPDH_I_N"/>
    <property type="match status" value="1"/>
</dbReference>
<dbReference type="FunFam" id="3.30.360.10:FF:000001">
    <property type="entry name" value="Glyceraldehyde-3-phosphate dehydrogenase"/>
    <property type="match status" value="1"/>
</dbReference>
<dbReference type="FunFam" id="3.40.50.720:FF:000266">
    <property type="entry name" value="Glyceraldehyde-3-phosphate dehydrogenase"/>
    <property type="match status" value="1"/>
</dbReference>
<dbReference type="Gene3D" id="3.30.360.10">
    <property type="entry name" value="Dihydrodipicolinate Reductase, domain 2"/>
    <property type="match status" value="1"/>
</dbReference>
<dbReference type="Gene3D" id="3.40.50.720">
    <property type="entry name" value="NAD(P)-binding Rossmann-like Domain"/>
    <property type="match status" value="1"/>
</dbReference>
<dbReference type="InterPro" id="IPR020831">
    <property type="entry name" value="GlycerAld/Erythrose_P_DH"/>
</dbReference>
<dbReference type="InterPro" id="IPR020830">
    <property type="entry name" value="GlycerAld_3-P_DH_AS"/>
</dbReference>
<dbReference type="InterPro" id="IPR020829">
    <property type="entry name" value="GlycerAld_3-P_DH_cat"/>
</dbReference>
<dbReference type="InterPro" id="IPR020828">
    <property type="entry name" value="GlycerAld_3-P_DH_NAD(P)-bd"/>
</dbReference>
<dbReference type="InterPro" id="IPR006424">
    <property type="entry name" value="Glyceraldehyde-3-P_DH_1"/>
</dbReference>
<dbReference type="InterPro" id="IPR036291">
    <property type="entry name" value="NAD(P)-bd_dom_sf"/>
</dbReference>
<dbReference type="NCBIfam" id="TIGR01534">
    <property type="entry name" value="GAPDH-I"/>
    <property type="match status" value="1"/>
</dbReference>
<dbReference type="PANTHER" id="PTHR10836">
    <property type="entry name" value="GLYCERALDEHYDE 3-PHOSPHATE DEHYDROGENASE"/>
    <property type="match status" value="1"/>
</dbReference>
<dbReference type="PANTHER" id="PTHR10836:SF76">
    <property type="entry name" value="GLYCERALDEHYDE-3-PHOSPHATE DEHYDROGENASE-RELATED"/>
    <property type="match status" value="1"/>
</dbReference>
<dbReference type="Pfam" id="PF02800">
    <property type="entry name" value="Gp_dh_C"/>
    <property type="match status" value="1"/>
</dbReference>
<dbReference type="Pfam" id="PF00044">
    <property type="entry name" value="Gp_dh_N"/>
    <property type="match status" value="1"/>
</dbReference>
<dbReference type="PIRSF" id="PIRSF000149">
    <property type="entry name" value="GAP_DH"/>
    <property type="match status" value="1"/>
</dbReference>
<dbReference type="PRINTS" id="PR00078">
    <property type="entry name" value="G3PDHDRGNASE"/>
</dbReference>
<dbReference type="SMART" id="SM00846">
    <property type="entry name" value="Gp_dh_N"/>
    <property type="match status" value="1"/>
</dbReference>
<dbReference type="SUPFAM" id="SSF55347">
    <property type="entry name" value="Glyceraldehyde-3-phosphate dehydrogenase-like, C-terminal domain"/>
    <property type="match status" value="1"/>
</dbReference>
<dbReference type="SUPFAM" id="SSF51735">
    <property type="entry name" value="NAD(P)-binding Rossmann-fold domains"/>
    <property type="match status" value="1"/>
</dbReference>
<dbReference type="PROSITE" id="PS00071">
    <property type="entry name" value="GAPDH"/>
    <property type="match status" value="1"/>
</dbReference>
<keyword id="KW-0963">Cytoplasm</keyword>
<keyword id="KW-0324">Glycolysis</keyword>
<keyword id="KW-0520">NAD</keyword>
<keyword id="KW-0560">Oxidoreductase</keyword>
<organism>
    <name type="scientific">Phanerodontia chrysosporium</name>
    <name type="common">White-rot fungus</name>
    <name type="synonym">Sporotrichum pruinosum</name>
    <dbReference type="NCBI Taxonomy" id="2822231"/>
    <lineage>
        <taxon>Eukaryota</taxon>
        <taxon>Fungi</taxon>
        <taxon>Dikarya</taxon>
        <taxon>Basidiomycota</taxon>
        <taxon>Agaricomycotina</taxon>
        <taxon>Agaricomycetes</taxon>
        <taxon>Polyporales</taxon>
        <taxon>Phanerochaetaceae</taxon>
        <taxon>Phanerodontia</taxon>
    </lineage>
</organism>
<evidence type="ECO:0000250" key="1"/>
<evidence type="ECO:0000255" key="2">
    <source>
        <dbReference type="PROSITE-ProRule" id="PRU10009"/>
    </source>
</evidence>
<evidence type="ECO:0000305" key="3"/>
<accession>Q01982</accession>